<accession>B2UUR0</accession>
<organism>
    <name type="scientific">Helicobacter pylori (strain Shi470)</name>
    <dbReference type="NCBI Taxonomy" id="512562"/>
    <lineage>
        <taxon>Bacteria</taxon>
        <taxon>Pseudomonadati</taxon>
        <taxon>Campylobacterota</taxon>
        <taxon>Epsilonproteobacteria</taxon>
        <taxon>Campylobacterales</taxon>
        <taxon>Helicobacteraceae</taxon>
        <taxon>Helicobacter</taxon>
    </lineage>
</organism>
<sequence>MTVIRLTRIGRKKKPFYRVVVTDSRKRRDGGWIESIGYYNPLSEPKDIKIDKERLNYWKGVGAKMSERVEKLSQKA</sequence>
<evidence type="ECO:0000255" key="1">
    <source>
        <dbReference type="HAMAP-Rule" id="MF_00385"/>
    </source>
</evidence>
<evidence type="ECO:0000305" key="2"/>
<feature type="chain" id="PRO_1000196417" description="Small ribosomal subunit protein bS16">
    <location>
        <begin position="1"/>
        <end position="76"/>
    </location>
</feature>
<keyword id="KW-0687">Ribonucleoprotein</keyword>
<keyword id="KW-0689">Ribosomal protein</keyword>
<proteinExistence type="inferred from homology"/>
<protein>
    <recommendedName>
        <fullName evidence="1">Small ribosomal subunit protein bS16</fullName>
    </recommendedName>
    <alternativeName>
        <fullName evidence="2">30S ribosomal protein S16</fullName>
    </alternativeName>
</protein>
<name>RS16_HELPS</name>
<reference key="1">
    <citation type="submission" date="2008-05" db="EMBL/GenBank/DDBJ databases">
        <title>Genome sequence of Helicobacter pylori from the remote Amazon: traces of Asian ancestry of the first Americans.</title>
        <authorList>
            <person name="Kersulyte D."/>
            <person name="Kalia A."/>
            <person name="Gilman R.H."/>
            <person name="Berg D.E."/>
        </authorList>
    </citation>
    <scope>NUCLEOTIDE SEQUENCE [LARGE SCALE GENOMIC DNA]</scope>
    <source>
        <strain>Shi470</strain>
    </source>
</reference>
<dbReference type="EMBL" id="CP001072">
    <property type="protein sequence ID" value="ACD48592.1"/>
    <property type="molecule type" value="Genomic_DNA"/>
</dbReference>
<dbReference type="RefSeq" id="WP_000216125.1">
    <property type="nucleotide sequence ID" value="NC_010698.2"/>
</dbReference>
<dbReference type="SMR" id="B2UUR0"/>
<dbReference type="KEGG" id="hps:HPSH_05940"/>
<dbReference type="HOGENOM" id="CLU_100590_5_1_7"/>
<dbReference type="GO" id="GO:0005737">
    <property type="term" value="C:cytoplasm"/>
    <property type="evidence" value="ECO:0007669"/>
    <property type="project" value="UniProtKB-ARBA"/>
</dbReference>
<dbReference type="GO" id="GO:0015935">
    <property type="term" value="C:small ribosomal subunit"/>
    <property type="evidence" value="ECO:0007669"/>
    <property type="project" value="TreeGrafter"/>
</dbReference>
<dbReference type="GO" id="GO:0003735">
    <property type="term" value="F:structural constituent of ribosome"/>
    <property type="evidence" value="ECO:0007669"/>
    <property type="project" value="InterPro"/>
</dbReference>
<dbReference type="GO" id="GO:0006412">
    <property type="term" value="P:translation"/>
    <property type="evidence" value="ECO:0007669"/>
    <property type="project" value="UniProtKB-UniRule"/>
</dbReference>
<dbReference type="FunFam" id="3.30.1320.10:FF:000005">
    <property type="entry name" value="30S ribosomal protein S16"/>
    <property type="match status" value="1"/>
</dbReference>
<dbReference type="Gene3D" id="3.30.1320.10">
    <property type="match status" value="1"/>
</dbReference>
<dbReference type="HAMAP" id="MF_00385">
    <property type="entry name" value="Ribosomal_bS16"/>
    <property type="match status" value="1"/>
</dbReference>
<dbReference type="InterPro" id="IPR000307">
    <property type="entry name" value="Ribosomal_bS16"/>
</dbReference>
<dbReference type="InterPro" id="IPR020592">
    <property type="entry name" value="Ribosomal_bS16_CS"/>
</dbReference>
<dbReference type="InterPro" id="IPR023803">
    <property type="entry name" value="Ribosomal_bS16_dom_sf"/>
</dbReference>
<dbReference type="NCBIfam" id="TIGR00002">
    <property type="entry name" value="S16"/>
    <property type="match status" value="1"/>
</dbReference>
<dbReference type="PANTHER" id="PTHR12919">
    <property type="entry name" value="30S RIBOSOMAL PROTEIN S16"/>
    <property type="match status" value="1"/>
</dbReference>
<dbReference type="PANTHER" id="PTHR12919:SF20">
    <property type="entry name" value="SMALL RIBOSOMAL SUBUNIT PROTEIN BS16M"/>
    <property type="match status" value="1"/>
</dbReference>
<dbReference type="Pfam" id="PF00886">
    <property type="entry name" value="Ribosomal_S16"/>
    <property type="match status" value="1"/>
</dbReference>
<dbReference type="SUPFAM" id="SSF54565">
    <property type="entry name" value="Ribosomal protein S16"/>
    <property type="match status" value="1"/>
</dbReference>
<dbReference type="PROSITE" id="PS00732">
    <property type="entry name" value="RIBOSOMAL_S16"/>
    <property type="match status" value="1"/>
</dbReference>
<comment type="similarity">
    <text evidence="1">Belongs to the bacterial ribosomal protein bS16 family.</text>
</comment>
<gene>
    <name evidence="1" type="primary">rpsP</name>
    <name type="ordered locus">HPSH_05940</name>
</gene>